<dbReference type="EC" id="3.1.3.5" evidence="1"/>
<dbReference type="EMBL" id="CP001157">
    <property type="protein sequence ID" value="ACO80011.1"/>
    <property type="molecule type" value="Genomic_DNA"/>
</dbReference>
<dbReference type="RefSeq" id="WP_012702386.1">
    <property type="nucleotide sequence ID" value="NC_012560.1"/>
</dbReference>
<dbReference type="SMR" id="C1DSR8"/>
<dbReference type="STRING" id="322710.Avin_38710"/>
<dbReference type="EnsemblBacteria" id="ACO80011">
    <property type="protein sequence ID" value="ACO80011"/>
    <property type="gene ID" value="Avin_38710"/>
</dbReference>
<dbReference type="GeneID" id="88186830"/>
<dbReference type="KEGG" id="avn:Avin_38710"/>
<dbReference type="eggNOG" id="COG0496">
    <property type="taxonomic scope" value="Bacteria"/>
</dbReference>
<dbReference type="HOGENOM" id="CLU_045192_1_2_6"/>
<dbReference type="OrthoDB" id="9780815at2"/>
<dbReference type="Proteomes" id="UP000002424">
    <property type="component" value="Chromosome"/>
</dbReference>
<dbReference type="GO" id="GO:0005737">
    <property type="term" value="C:cytoplasm"/>
    <property type="evidence" value="ECO:0007669"/>
    <property type="project" value="UniProtKB-SubCell"/>
</dbReference>
<dbReference type="GO" id="GO:0008254">
    <property type="term" value="F:3'-nucleotidase activity"/>
    <property type="evidence" value="ECO:0007669"/>
    <property type="project" value="TreeGrafter"/>
</dbReference>
<dbReference type="GO" id="GO:0008253">
    <property type="term" value="F:5'-nucleotidase activity"/>
    <property type="evidence" value="ECO:0007669"/>
    <property type="project" value="UniProtKB-UniRule"/>
</dbReference>
<dbReference type="GO" id="GO:0004309">
    <property type="term" value="F:exopolyphosphatase activity"/>
    <property type="evidence" value="ECO:0007669"/>
    <property type="project" value="TreeGrafter"/>
</dbReference>
<dbReference type="GO" id="GO:0046872">
    <property type="term" value="F:metal ion binding"/>
    <property type="evidence" value="ECO:0007669"/>
    <property type="project" value="UniProtKB-UniRule"/>
</dbReference>
<dbReference type="GO" id="GO:0000166">
    <property type="term" value="F:nucleotide binding"/>
    <property type="evidence" value="ECO:0007669"/>
    <property type="project" value="UniProtKB-KW"/>
</dbReference>
<dbReference type="FunFam" id="3.40.1210.10:FF:000001">
    <property type="entry name" value="5'/3'-nucleotidase SurE"/>
    <property type="match status" value="1"/>
</dbReference>
<dbReference type="Gene3D" id="3.40.1210.10">
    <property type="entry name" value="Survival protein SurE-like phosphatase/nucleotidase"/>
    <property type="match status" value="1"/>
</dbReference>
<dbReference type="HAMAP" id="MF_00060">
    <property type="entry name" value="SurE"/>
    <property type="match status" value="1"/>
</dbReference>
<dbReference type="InterPro" id="IPR030048">
    <property type="entry name" value="SurE"/>
</dbReference>
<dbReference type="InterPro" id="IPR002828">
    <property type="entry name" value="SurE-like_Pase/nucleotidase"/>
</dbReference>
<dbReference type="InterPro" id="IPR036523">
    <property type="entry name" value="SurE-like_sf"/>
</dbReference>
<dbReference type="NCBIfam" id="NF001489">
    <property type="entry name" value="PRK00346.1-3"/>
    <property type="match status" value="1"/>
</dbReference>
<dbReference type="NCBIfam" id="NF001490">
    <property type="entry name" value="PRK00346.1-4"/>
    <property type="match status" value="1"/>
</dbReference>
<dbReference type="NCBIfam" id="TIGR00087">
    <property type="entry name" value="surE"/>
    <property type="match status" value="1"/>
</dbReference>
<dbReference type="PANTHER" id="PTHR30457">
    <property type="entry name" value="5'-NUCLEOTIDASE SURE"/>
    <property type="match status" value="1"/>
</dbReference>
<dbReference type="PANTHER" id="PTHR30457:SF12">
    <property type="entry name" value="5'_3'-NUCLEOTIDASE SURE"/>
    <property type="match status" value="1"/>
</dbReference>
<dbReference type="Pfam" id="PF01975">
    <property type="entry name" value="SurE"/>
    <property type="match status" value="1"/>
</dbReference>
<dbReference type="SUPFAM" id="SSF64167">
    <property type="entry name" value="SurE-like"/>
    <property type="match status" value="1"/>
</dbReference>
<sequence length="249" mass="26553">MRILIANDDGALAPGIAALHDALADMAECVVVAPIKDMSGVSGSLTLDRPLHPQLLSNGFIALDGTPTDCVHLGLNGLLDPVPDMVVSGINLGANLGDDVLYSGTVAAAIEGRFCKRPAFAFSLLSREPDNLPAAAHIARTLVEHHERLALPPRTVLSVNIPNLPLERIRGIRLCRLGHRARAKAPVKMVNPRGKEGYWISVAGDAEDGGPGTDFHAVMQGYVSITPLQLDRTFHEAFAGLDSWLEDLL</sequence>
<gene>
    <name evidence="1" type="primary">surE</name>
    <name type="ordered locus">Avin_38710</name>
</gene>
<comment type="function">
    <text evidence="1">Nucleotidase that shows phosphatase activity on nucleoside 5'-monophosphates.</text>
</comment>
<comment type="catalytic activity">
    <reaction evidence="1">
        <text>a ribonucleoside 5'-phosphate + H2O = a ribonucleoside + phosphate</text>
        <dbReference type="Rhea" id="RHEA:12484"/>
        <dbReference type="ChEBI" id="CHEBI:15377"/>
        <dbReference type="ChEBI" id="CHEBI:18254"/>
        <dbReference type="ChEBI" id="CHEBI:43474"/>
        <dbReference type="ChEBI" id="CHEBI:58043"/>
        <dbReference type="EC" id="3.1.3.5"/>
    </reaction>
</comment>
<comment type="cofactor">
    <cofactor evidence="1">
        <name>a divalent metal cation</name>
        <dbReference type="ChEBI" id="CHEBI:60240"/>
    </cofactor>
    <text evidence="1">Binds 1 divalent metal cation per subunit.</text>
</comment>
<comment type="subcellular location">
    <subcellularLocation>
        <location evidence="1">Cytoplasm</location>
    </subcellularLocation>
</comment>
<comment type="similarity">
    <text evidence="1">Belongs to the SurE nucleotidase family.</text>
</comment>
<protein>
    <recommendedName>
        <fullName evidence="1">5'-nucleotidase SurE</fullName>
        <ecNumber evidence="1">3.1.3.5</ecNumber>
    </recommendedName>
    <alternativeName>
        <fullName evidence="1">Nucleoside 5'-monophosphate phosphohydrolase</fullName>
    </alternativeName>
</protein>
<reference key="1">
    <citation type="journal article" date="2009" name="J. Bacteriol.">
        <title>Genome sequence of Azotobacter vinelandii, an obligate aerobe specialized to support diverse anaerobic metabolic processes.</title>
        <authorList>
            <person name="Setubal J.C."/>
            <person name="Dos Santos P."/>
            <person name="Goldman B.S."/>
            <person name="Ertesvaag H."/>
            <person name="Espin G."/>
            <person name="Rubio L.M."/>
            <person name="Valla S."/>
            <person name="Almeida N.F."/>
            <person name="Balasubramanian D."/>
            <person name="Cromes L."/>
            <person name="Curatti L."/>
            <person name="Du Z."/>
            <person name="Godsy E."/>
            <person name="Goodner B."/>
            <person name="Hellner-Burris K."/>
            <person name="Hernandez J.A."/>
            <person name="Houmiel K."/>
            <person name="Imperial J."/>
            <person name="Kennedy C."/>
            <person name="Larson T.J."/>
            <person name="Latreille P."/>
            <person name="Ligon L.S."/>
            <person name="Lu J."/>
            <person name="Maerk M."/>
            <person name="Miller N.M."/>
            <person name="Norton S."/>
            <person name="O'Carroll I.P."/>
            <person name="Paulsen I."/>
            <person name="Raulfs E.C."/>
            <person name="Roemer R."/>
            <person name="Rosser J."/>
            <person name="Segura D."/>
            <person name="Slater S."/>
            <person name="Stricklin S.L."/>
            <person name="Studholme D.J."/>
            <person name="Sun J."/>
            <person name="Viana C.J."/>
            <person name="Wallin E."/>
            <person name="Wang B."/>
            <person name="Wheeler C."/>
            <person name="Zhu H."/>
            <person name="Dean D.R."/>
            <person name="Dixon R."/>
            <person name="Wood D."/>
        </authorList>
    </citation>
    <scope>NUCLEOTIDE SEQUENCE [LARGE SCALE GENOMIC DNA]</scope>
    <source>
        <strain>DJ / ATCC BAA-1303</strain>
    </source>
</reference>
<feature type="chain" id="PRO_1000202362" description="5'-nucleotidase SurE">
    <location>
        <begin position="1"/>
        <end position="249"/>
    </location>
</feature>
<feature type="binding site" evidence="1">
    <location>
        <position position="8"/>
    </location>
    <ligand>
        <name>a divalent metal cation</name>
        <dbReference type="ChEBI" id="CHEBI:60240"/>
    </ligand>
</feature>
<feature type="binding site" evidence="1">
    <location>
        <position position="9"/>
    </location>
    <ligand>
        <name>a divalent metal cation</name>
        <dbReference type="ChEBI" id="CHEBI:60240"/>
    </ligand>
</feature>
<feature type="binding site" evidence="1">
    <location>
        <position position="39"/>
    </location>
    <ligand>
        <name>a divalent metal cation</name>
        <dbReference type="ChEBI" id="CHEBI:60240"/>
    </ligand>
</feature>
<feature type="binding site" evidence="1">
    <location>
        <position position="91"/>
    </location>
    <ligand>
        <name>a divalent metal cation</name>
        <dbReference type="ChEBI" id="CHEBI:60240"/>
    </ligand>
</feature>
<accession>C1DSR8</accession>
<name>SURE_AZOVD</name>
<evidence type="ECO:0000255" key="1">
    <source>
        <dbReference type="HAMAP-Rule" id="MF_00060"/>
    </source>
</evidence>
<keyword id="KW-0963">Cytoplasm</keyword>
<keyword id="KW-0378">Hydrolase</keyword>
<keyword id="KW-0479">Metal-binding</keyword>
<keyword id="KW-0547">Nucleotide-binding</keyword>
<organism>
    <name type="scientific">Azotobacter vinelandii (strain DJ / ATCC BAA-1303)</name>
    <dbReference type="NCBI Taxonomy" id="322710"/>
    <lineage>
        <taxon>Bacteria</taxon>
        <taxon>Pseudomonadati</taxon>
        <taxon>Pseudomonadota</taxon>
        <taxon>Gammaproteobacteria</taxon>
        <taxon>Pseudomonadales</taxon>
        <taxon>Pseudomonadaceae</taxon>
        <taxon>Azotobacter</taxon>
    </lineage>
</organism>
<proteinExistence type="inferred from homology"/>